<evidence type="ECO:0000255" key="1">
    <source>
        <dbReference type="HAMAP-Rule" id="MF_00584"/>
    </source>
</evidence>
<name>Y2347_METMJ</name>
<gene>
    <name type="ordered locus">Memar_2347</name>
</gene>
<accession>A3CY20</accession>
<feature type="chain" id="PRO_1000082411" description="Putative HTH-type transcriptional regulatory protein Memar_2347">
    <location>
        <begin position="1"/>
        <end position="304"/>
    </location>
</feature>
<feature type="domain" description="HTH cro/C1-type" evidence="1">
    <location>
        <begin position="132"/>
        <end position="189"/>
    </location>
</feature>
<feature type="DNA-binding region" description="H-T-H motif" evidence="1">
    <location>
        <begin position="143"/>
        <end position="162"/>
    </location>
</feature>
<keyword id="KW-0238">DNA-binding</keyword>
<keyword id="KW-0804">Transcription</keyword>
<keyword id="KW-0805">Transcription regulation</keyword>
<protein>
    <recommendedName>
        <fullName evidence="1">Putative HTH-type transcriptional regulatory protein Memar_2347</fullName>
    </recommendedName>
</protein>
<proteinExistence type="inferred from homology"/>
<organism>
    <name type="scientific">Methanoculleus marisnigri (strain ATCC 35101 / DSM 1498 / JR1)</name>
    <dbReference type="NCBI Taxonomy" id="368407"/>
    <lineage>
        <taxon>Archaea</taxon>
        <taxon>Methanobacteriati</taxon>
        <taxon>Methanobacteriota</taxon>
        <taxon>Stenosarchaea group</taxon>
        <taxon>Methanomicrobia</taxon>
        <taxon>Methanomicrobiales</taxon>
        <taxon>Methanomicrobiaceae</taxon>
        <taxon>Methanoculleus</taxon>
    </lineage>
</organism>
<dbReference type="EMBL" id="CP000562">
    <property type="protein sequence ID" value="ABN58270.1"/>
    <property type="molecule type" value="Genomic_DNA"/>
</dbReference>
<dbReference type="RefSeq" id="WP_011845179.1">
    <property type="nucleotide sequence ID" value="NC_009051.1"/>
</dbReference>
<dbReference type="SMR" id="A3CY20"/>
<dbReference type="STRING" id="368407.Memar_2347"/>
<dbReference type="GeneID" id="4847035"/>
<dbReference type="KEGG" id="mem:Memar_2347"/>
<dbReference type="eggNOG" id="arCOG04152">
    <property type="taxonomic scope" value="Archaea"/>
</dbReference>
<dbReference type="HOGENOM" id="CLU_075726_0_0_2"/>
<dbReference type="OrthoDB" id="31424at2157"/>
<dbReference type="Proteomes" id="UP000002146">
    <property type="component" value="Chromosome"/>
</dbReference>
<dbReference type="GO" id="GO:0003677">
    <property type="term" value="F:DNA binding"/>
    <property type="evidence" value="ECO:0007669"/>
    <property type="project" value="UniProtKB-KW"/>
</dbReference>
<dbReference type="GO" id="GO:0003700">
    <property type="term" value="F:DNA-binding transcription factor activity"/>
    <property type="evidence" value="ECO:0007669"/>
    <property type="project" value="UniProtKB-UniRule"/>
</dbReference>
<dbReference type="CDD" id="cd00093">
    <property type="entry name" value="HTH_XRE"/>
    <property type="match status" value="1"/>
</dbReference>
<dbReference type="Gene3D" id="1.10.260.40">
    <property type="entry name" value="lambda repressor-like DNA-binding domains"/>
    <property type="match status" value="1"/>
</dbReference>
<dbReference type="HAMAP" id="MF_00584">
    <property type="entry name" value="HTH_type_cro_C1"/>
    <property type="match status" value="1"/>
</dbReference>
<dbReference type="InterPro" id="IPR020886">
    <property type="entry name" value="Arc_TR_HTH"/>
</dbReference>
<dbReference type="InterPro" id="IPR001387">
    <property type="entry name" value="Cro/C1-type_HTH"/>
</dbReference>
<dbReference type="InterPro" id="IPR010982">
    <property type="entry name" value="Lambda_DNA-bd_dom_sf"/>
</dbReference>
<dbReference type="NCBIfam" id="NF003162">
    <property type="entry name" value="PRK04140.1"/>
    <property type="match status" value="1"/>
</dbReference>
<dbReference type="Pfam" id="PF01381">
    <property type="entry name" value="HTH_3"/>
    <property type="match status" value="1"/>
</dbReference>
<dbReference type="SMART" id="SM00530">
    <property type="entry name" value="HTH_XRE"/>
    <property type="match status" value="1"/>
</dbReference>
<dbReference type="SUPFAM" id="SSF47413">
    <property type="entry name" value="lambda repressor-like DNA-binding domains"/>
    <property type="match status" value="1"/>
</dbReference>
<dbReference type="PROSITE" id="PS50943">
    <property type="entry name" value="HTH_CROC1"/>
    <property type="match status" value="1"/>
</dbReference>
<reference key="1">
    <citation type="journal article" date="2009" name="Stand. Genomic Sci.">
        <title>Complete genome sequence of Methanoculleus marisnigri Romesser et al. 1981 type strain JR1.</title>
        <authorList>
            <person name="Anderson I.J."/>
            <person name="Sieprawska-Lupa M."/>
            <person name="Lapidus A."/>
            <person name="Nolan M."/>
            <person name="Copeland A."/>
            <person name="Glavina Del Rio T."/>
            <person name="Tice H."/>
            <person name="Dalin E."/>
            <person name="Barry K."/>
            <person name="Saunders E."/>
            <person name="Han C."/>
            <person name="Brettin T."/>
            <person name="Detter J.C."/>
            <person name="Bruce D."/>
            <person name="Mikhailova N."/>
            <person name="Pitluck S."/>
            <person name="Hauser L."/>
            <person name="Land M."/>
            <person name="Lucas S."/>
            <person name="Richardson P."/>
            <person name="Whitman W.B."/>
            <person name="Kyrpides N.C."/>
        </authorList>
    </citation>
    <scope>NUCLEOTIDE SEQUENCE [LARGE SCALE GENOMIC DNA]</scope>
    <source>
        <strain>ATCC 35101 / DSM 1498 / JR1</strain>
    </source>
</reference>
<sequence>MSQDRLPQMVISIMLLANFDVSERCNIRPRSFDLIAKKGDNLVIIKVASHIDSVSADITWDLNLIARYLEATPLIVGERARDTDLERGVVYIRYGLFALNPETLYDYFVEGLSPMVYASPGGLYVRIKGDLLREVRERFRMSLGDLASHLGVSRRTISKYESGMGTTLDVAIKLEEIFNAPLVETIELLGYRTPEPEKHLESTPGDVLADLERMGMEIHAMRQAPFQALALFDRHTILTAYGTSQKIVKRASLIGNISQITKTFAMCVVTDYKKQKKIGKTLLIGEEHLHTLEDGSELIDMINE</sequence>